<dbReference type="EC" id="2.1.1.195" evidence="1"/>
<dbReference type="EMBL" id="AJ000758">
    <property type="protein sequence ID" value="CAA04311.1"/>
    <property type="molecule type" value="Genomic_DNA"/>
</dbReference>
<dbReference type="PIR" id="T44687">
    <property type="entry name" value="T44687"/>
</dbReference>
<dbReference type="SMR" id="O87693"/>
<dbReference type="UniPathway" id="UPA00148">
    <property type="reaction ID" value="UER00227"/>
</dbReference>
<dbReference type="GO" id="GO:0043780">
    <property type="term" value="F:cobalt-precorrin-5B C1-methyltransferase activity"/>
    <property type="evidence" value="ECO:0007669"/>
    <property type="project" value="RHEA"/>
</dbReference>
<dbReference type="GO" id="GO:0019251">
    <property type="term" value="P:anaerobic cobalamin biosynthetic process"/>
    <property type="evidence" value="ECO:0007669"/>
    <property type="project" value="UniProtKB-UniRule"/>
</dbReference>
<dbReference type="GO" id="GO:0032259">
    <property type="term" value="P:methylation"/>
    <property type="evidence" value="ECO:0007669"/>
    <property type="project" value="UniProtKB-KW"/>
</dbReference>
<dbReference type="Gene3D" id="3.30.2110.10">
    <property type="entry name" value="CbiD-like"/>
    <property type="match status" value="1"/>
</dbReference>
<dbReference type="HAMAP" id="MF_00787">
    <property type="entry name" value="CbiD"/>
    <property type="match status" value="1"/>
</dbReference>
<dbReference type="InterPro" id="IPR002748">
    <property type="entry name" value="CbiD"/>
</dbReference>
<dbReference type="InterPro" id="IPR036074">
    <property type="entry name" value="CbiD_sf"/>
</dbReference>
<dbReference type="NCBIfam" id="TIGR00312">
    <property type="entry name" value="cbiD"/>
    <property type="match status" value="1"/>
</dbReference>
<dbReference type="NCBIfam" id="NF000849">
    <property type="entry name" value="PRK00075.1-1"/>
    <property type="match status" value="1"/>
</dbReference>
<dbReference type="PANTHER" id="PTHR35863">
    <property type="entry name" value="COBALT-PRECORRIN-5B C(1)-METHYLTRANSFERASE"/>
    <property type="match status" value="1"/>
</dbReference>
<dbReference type="PANTHER" id="PTHR35863:SF1">
    <property type="entry name" value="COBALT-PRECORRIN-5B C(1)-METHYLTRANSFERASE"/>
    <property type="match status" value="1"/>
</dbReference>
<dbReference type="Pfam" id="PF01888">
    <property type="entry name" value="CbiD"/>
    <property type="match status" value="1"/>
</dbReference>
<dbReference type="PIRSF" id="PIRSF026782">
    <property type="entry name" value="CbiD"/>
    <property type="match status" value="1"/>
</dbReference>
<dbReference type="SUPFAM" id="SSF111342">
    <property type="entry name" value="CbiD-like"/>
    <property type="match status" value="1"/>
</dbReference>
<proteinExistence type="evidence at protein level"/>
<protein>
    <recommendedName>
        <fullName evidence="1">Cobalt-precorrin-5B C(1)-methyltransferase</fullName>
        <ecNumber evidence="1">2.1.1.195</ecNumber>
    </recommendedName>
    <alternativeName>
        <fullName evidence="1">Cobalt-precorrin-6A synthase</fullName>
    </alternativeName>
</protein>
<keyword id="KW-0169">Cobalamin biosynthesis</keyword>
<keyword id="KW-0489">Methyltransferase</keyword>
<keyword id="KW-0949">S-adenosyl-L-methionine</keyword>
<keyword id="KW-0808">Transferase</keyword>
<evidence type="ECO:0000255" key="1">
    <source>
        <dbReference type="HAMAP-Rule" id="MF_00787"/>
    </source>
</evidence>
<evidence type="ECO:0000269" key="2">
    <source>
    </source>
</evidence>
<feature type="chain" id="PRO_0000141657" description="Cobalt-precorrin-5B C(1)-methyltransferase">
    <location>
        <begin position="1"/>
        <end position="367"/>
    </location>
</feature>
<sequence length="367" mass="39022">MKEVPKEPKKLREGYTTGACATAATRAALLTLISGEVQDESTIYLPVGRFATFHLEECEYRTSSAVASIIKDAGDDPDATHGALIISEVSWCNGVDIIIDGGVGVGRVTKPGLPVPVGEAAINPVPRKMLKETAQQLLAEYNIQKGVKVVISVPEGEEMAKKTLNARLGILGGISILGTRGIVVPFSTAAYKASIVQAISVAKASNCEHVVITTGGRSEKYGMKQFPELPEEAFIQMGDFVGFTLKQCKKQGMKKVSLVGMMGKFSKVAQGVMMVHSKSAPIDFNFLAKAASESGASAELVEEIKGANTASQVGDLMTQSGHHQFFEKLCEYCCLSALKEVGDGIDVDTSLYTLKGDFLGQAVQHGN</sequence>
<accession>O87693</accession>
<organism>
    <name type="scientific">Priestia megaterium</name>
    <name type="common">Bacillus megaterium</name>
    <dbReference type="NCBI Taxonomy" id="1404"/>
    <lineage>
        <taxon>Bacteria</taxon>
        <taxon>Bacillati</taxon>
        <taxon>Bacillota</taxon>
        <taxon>Bacilli</taxon>
        <taxon>Bacillales</taxon>
        <taxon>Bacillaceae</taxon>
        <taxon>Priestia</taxon>
    </lineage>
</organism>
<comment type="function">
    <text evidence="1 2">Catalyzes the methylation of C-1 in cobalt-precorrin-5B to form cobalt-precorrin-6A.</text>
</comment>
<comment type="catalytic activity">
    <reaction evidence="1 2">
        <text>Co-precorrin-5B + S-adenosyl-L-methionine = Co-precorrin-6A + S-adenosyl-L-homocysteine</text>
        <dbReference type="Rhea" id="RHEA:26285"/>
        <dbReference type="ChEBI" id="CHEBI:57856"/>
        <dbReference type="ChEBI" id="CHEBI:59789"/>
        <dbReference type="ChEBI" id="CHEBI:60063"/>
        <dbReference type="ChEBI" id="CHEBI:60064"/>
        <dbReference type="EC" id="2.1.1.195"/>
    </reaction>
</comment>
<comment type="pathway">
    <text evidence="1">Cofactor biosynthesis; adenosylcobalamin biosynthesis; cob(II)yrinate a,c-diamide from sirohydrochlorin (anaerobic route): step 6/10.</text>
</comment>
<comment type="similarity">
    <text evidence="1">Belongs to the CbiD family.</text>
</comment>
<gene>
    <name evidence="1" type="primary">cbiD</name>
</gene>
<reference key="1">
    <citation type="journal article" date="1998" name="Biochem. J.">
        <title>Cobalamin (vitamin B12) biosynthesis: identification and characterization of a Bacillus megaterium cobI operon.</title>
        <authorList>
            <person name="Raux E."/>
            <person name="Lanois A."/>
            <person name="Warren M.J."/>
            <person name="Rambach A."/>
            <person name="Thermes C."/>
        </authorList>
    </citation>
    <scope>NUCLEOTIDE SEQUENCE [GENOMIC DNA]</scope>
    <source>
        <strain>DSM 509 / CCM 1464 / NBRC 12109</strain>
    </source>
</reference>
<reference key="2">
    <citation type="journal article" date="2013" name="Proc. Natl. Acad. Sci. U.S.A.">
        <title>Elucidation of the anaerobic pathway for the corrin component of cobalamin (vitamin B12).</title>
        <authorList>
            <person name="Moore S.J."/>
            <person name="Lawrence A.D."/>
            <person name="Biedendieck R."/>
            <person name="Deery E."/>
            <person name="Frank S."/>
            <person name="Howard M.J."/>
            <person name="Rigby S.E."/>
            <person name="Warren M.J."/>
        </authorList>
    </citation>
    <scope>FUNCTION</scope>
    <scope>CATALYTIC ACTIVITY</scope>
</reference>
<name>CBID_PRIMG</name>